<protein>
    <recommendedName>
        <fullName evidence="1">Homoserine O-succinyltransferase</fullName>
        <shortName evidence="1">HST</shortName>
        <ecNumber evidence="1">2.3.1.46</ecNumber>
    </recommendedName>
    <alternativeName>
        <fullName evidence="1">Homoserine transsuccinylase</fullName>
        <shortName evidence="1">HTS</shortName>
    </alternativeName>
</protein>
<accession>A5WAD0</accession>
<sequence length="379" mass="41718">MSTVFPEDSVGLVVPQTARFDEPLALACGRSLASYELVYETYGTLNASASNAVLICHALSGHHHAAGYHAATDRKPGWWDSCIGPGKPIDTNRFFVVSLNNLGGCNGSTGPSSVNPATGKPYGAEFPVLTVEDWVHSQARLADRLGIQQWAAIVGGSLGGMQALQWTMTYPERVRHCVDIASAPKLSAQNIAFNEVARQAILTDPEFHGGSFQDQGVIPKRGLMLARMVGHITYLSDDSMGEKFGRELKSDKLNYDFHSVEFQVESYLRYQGEEFSGRFDANTYLLMTKALDYFDPAATHGGDLAATLAHVKADYCIMSFTTDWRFSPARSREIVDALMAARKNVCYLEIDSPYGHDAFLIPTPRYMQGFSNYMNRIAI</sequence>
<comment type="function">
    <text evidence="1">Transfers a succinyl group from succinyl-CoA to L-homoserine, forming succinyl-L-homoserine.</text>
</comment>
<comment type="catalytic activity">
    <reaction evidence="1">
        <text>L-homoserine + succinyl-CoA = O-succinyl-L-homoserine + CoA</text>
        <dbReference type="Rhea" id="RHEA:22008"/>
        <dbReference type="ChEBI" id="CHEBI:57287"/>
        <dbReference type="ChEBI" id="CHEBI:57292"/>
        <dbReference type="ChEBI" id="CHEBI:57476"/>
        <dbReference type="ChEBI" id="CHEBI:57661"/>
        <dbReference type="EC" id="2.3.1.46"/>
    </reaction>
</comment>
<comment type="pathway">
    <text evidence="1">Amino-acid biosynthesis; L-methionine biosynthesis via de novo pathway; O-succinyl-L-homoserine from L-homoserine: step 1/1.</text>
</comment>
<comment type="subunit">
    <text evidence="1">Homodimer.</text>
</comment>
<comment type="subcellular location">
    <subcellularLocation>
        <location evidence="1">Cytoplasm</location>
    </subcellularLocation>
</comment>
<comment type="similarity">
    <text evidence="1">Belongs to the AB hydrolase superfamily. MetX family.</text>
</comment>
<dbReference type="EC" id="2.3.1.46" evidence="1"/>
<dbReference type="EMBL" id="CP000712">
    <property type="protein sequence ID" value="ABQ81090.1"/>
    <property type="molecule type" value="Genomic_DNA"/>
</dbReference>
<dbReference type="SMR" id="A5WAD0"/>
<dbReference type="ESTHER" id="psepu-METX">
    <property type="family name" value="Homoserine_transacetylase"/>
</dbReference>
<dbReference type="KEGG" id="ppf:Pput_4970"/>
<dbReference type="eggNOG" id="COG2021">
    <property type="taxonomic scope" value="Bacteria"/>
</dbReference>
<dbReference type="HOGENOM" id="CLU_028760_1_2_6"/>
<dbReference type="UniPathway" id="UPA00051">
    <property type="reaction ID" value="UER00075"/>
</dbReference>
<dbReference type="GO" id="GO:0005737">
    <property type="term" value="C:cytoplasm"/>
    <property type="evidence" value="ECO:0007669"/>
    <property type="project" value="UniProtKB-SubCell"/>
</dbReference>
<dbReference type="GO" id="GO:0004414">
    <property type="term" value="F:homoserine O-acetyltransferase activity"/>
    <property type="evidence" value="ECO:0007669"/>
    <property type="project" value="TreeGrafter"/>
</dbReference>
<dbReference type="GO" id="GO:0008899">
    <property type="term" value="F:homoserine O-succinyltransferase activity"/>
    <property type="evidence" value="ECO:0007669"/>
    <property type="project" value="UniProtKB-UniRule"/>
</dbReference>
<dbReference type="GO" id="GO:0009092">
    <property type="term" value="P:homoserine metabolic process"/>
    <property type="evidence" value="ECO:0007669"/>
    <property type="project" value="TreeGrafter"/>
</dbReference>
<dbReference type="GO" id="GO:0009086">
    <property type="term" value="P:methionine biosynthetic process"/>
    <property type="evidence" value="ECO:0007669"/>
    <property type="project" value="UniProtKB-UniRule"/>
</dbReference>
<dbReference type="FunFam" id="1.10.1740.110:FF:000001">
    <property type="entry name" value="Homoserine O-acetyltransferase"/>
    <property type="match status" value="1"/>
</dbReference>
<dbReference type="Gene3D" id="1.10.1740.110">
    <property type="match status" value="1"/>
</dbReference>
<dbReference type="Gene3D" id="3.40.50.1820">
    <property type="entry name" value="alpha/beta hydrolase"/>
    <property type="match status" value="1"/>
</dbReference>
<dbReference type="HAMAP" id="MF_00296">
    <property type="entry name" value="MetX_acyltransf"/>
    <property type="match status" value="1"/>
</dbReference>
<dbReference type="InterPro" id="IPR000073">
    <property type="entry name" value="AB_hydrolase_1"/>
</dbReference>
<dbReference type="InterPro" id="IPR029058">
    <property type="entry name" value="AB_hydrolase_fold"/>
</dbReference>
<dbReference type="InterPro" id="IPR008220">
    <property type="entry name" value="HAT_MetX-like"/>
</dbReference>
<dbReference type="NCBIfam" id="TIGR01392">
    <property type="entry name" value="homoserO_Ac_trn"/>
    <property type="match status" value="1"/>
</dbReference>
<dbReference type="NCBIfam" id="NF001209">
    <property type="entry name" value="PRK00175.1"/>
    <property type="match status" value="1"/>
</dbReference>
<dbReference type="PANTHER" id="PTHR32268">
    <property type="entry name" value="HOMOSERINE O-ACETYLTRANSFERASE"/>
    <property type="match status" value="1"/>
</dbReference>
<dbReference type="PANTHER" id="PTHR32268:SF11">
    <property type="entry name" value="HOMOSERINE O-ACETYLTRANSFERASE"/>
    <property type="match status" value="1"/>
</dbReference>
<dbReference type="Pfam" id="PF00561">
    <property type="entry name" value="Abhydrolase_1"/>
    <property type="match status" value="1"/>
</dbReference>
<dbReference type="PIRSF" id="PIRSF000443">
    <property type="entry name" value="Homoser_Ac_trans"/>
    <property type="match status" value="1"/>
</dbReference>
<dbReference type="SUPFAM" id="SSF53474">
    <property type="entry name" value="alpha/beta-Hydrolases"/>
    <property type="match status" value="1"/>
</dbReference>
<proteinExistence type="inferred from homology"/>
<keyword id="KW-0012">Acyltransferase</keyword>
<keyword id="KW-0028">Amino-acid biosynthesis</keyword>
<keyword id="KW-0963">Cytoplasm</keyword>
<keyword id="KW-0486">Methionine biosynthesis</keyword>
<keyword id="KW-0808">Transferase</keyword>
<reference key="1">
    <citation type="submission" date="2007-05" db="EMBL/GenBank/DDBJ databases">
        <title>Complete sequence of Pseudomonas putida F1.</title>
        <authorList>
            <consortium name="US DOE Joint Genome Institute"/>
            <person name="Copeland A."/>
            <person name="Lucas S."/>
            <person name="Lapidus A."/>
            <person name="Barry K."/>
            <person name="Detter J.C."/>
            <person name="Glavina del Rio T."/>
            <person name="Hammon N."/>
            <person name="Israni S."/>
            <person name="Dalin E."/>
            <person name="Tice H."/>
            <person name="Pitluck S."/>
            <person name="Chain P."/>
            <person name="Malfatti S."/>
            <person name="Shin M."/>
            <person name="Vergez L."/>
            <person name="Schmutz J."/>
            <person name="Larimer F."/>
            <person name="Land M."/>
            <person name="Hauser L."/>
            <person name="Kyrpides N."/>
            <person name="Lykidis A."/>
            <person name="Parales R."/>
            <person name="Richardson P."/>
        </authorList>
    </citation>
    <scope>NUCLEOTIDE SEQUENCE [LARGE SCALE GENOMIC DNA]</scope>
    <source>
        <strain>ATCC 700007 / DSM 6899 / JCM 31910 / BCRC 17059 / LMG 24140 / F1</strain>
    </source>
</reference>
<organism>
    <name type="scientific">Pseudomonas putida (strain ATCC 700007 / DSM 6899 / JCM 31910 / BCRC 17059 / LMG 24140 / F1)</name>
    <dbReference type="NCBI Taxonomy" id="351746"/>
    <lineage>
        <taxon>Bacteria</taxon>
        <taxon>Pseudomonadati</taxon>
        <taxon>Pseudomonadota</taxon>
        <taxon>Gammaproteobacteria</taxon>
        <taxon>Pseudomonadales</taxon>
        <taxon>Pseudomonadaceae</taxon>
        <taxon>Pseudomonas</taxon>
    </lineage>
</organism>
<evidence type="ECO:0000255" key="1">
    <source>
        <dbReference type="HAMAP-Rule" id="MF_00296"/>
    </source>
</evidence>
<name>METXS_PSEP1</name>
<gene>
    <name evidence="1" type="primary">metXS</name>
    <name type="ordered locus">Pput_4970</name>
</gene>
<feature type="chain" id="PRO_1000021897" description="Homoserine O-succinyltransferase">
    <location>
        <begin position="1"/>
        <end position="379"/>
    </location>
</feature>
<feature type="domain" description="AB hydrolase-1" evidence="1">
    <location>
        <begin position="51"/>
        <end position="360"/>
    </location>
</feature>
<feature type="active site" description="Nucleophile" evidence="1">
    <location>
        <position position="157"/>
    </location>
</feature>
<feature type="active site" evidence="1">
    <location>
        <position position="323"/>
    </location>
</feature>
<feature type="active site" evidence="1">
    <location>
        <position position="356"/>
    </location>
</feature>
<feature type="binding site" evidence="1">
    <location>
        <position position="227"/>
    </location>
    <ligand>
        <name>substrate</name>
    </ligand>
</feature>
<feature type="binding site" evidence="1">
    <location>
        <position position="357"/>
    </location>
    <ligand>
        <name>substrate</name>
    </ligand>
</feature>
<feature type="site" description="Important for acyl-CoA specificity" evidence="1">
    <location>
        <position position="325"/>
    </location>
</feature>